<accession>Q1CLV4</accession>
<accession>C4GQ59</accession>
<comment type="similarity">
    <text evidence="1">Belongs to the SfsA family.</text>
</comment>
<comment type="sequence caution" evidence="2">
    <conflict type="erroneous initiation">
        <sequence resource="EMBL-CDS" id="ABG17026"/>
    </conflict>
</comment>
<organism>
    <name type="scientific">Yersinia pestis bv. Antiqua (strain Nepal516)</name>
    <dbReference type="NCBI Taxonomy" id="377628"/>
    <lineage>
        <taxon>Bacteria</taxon>
        <taxon>Pseudomonadati</taxon>
        <taxon>Pseudomonadota</taxon>
        <taxon>Gammaproteobacteria</taxon>
        <taxon>Enterobacterales</taxon>
        <taxon>Yersiniaceae</taxon>
        <taxon>Yersinia</taxon>
    </lineage>
</organism>
<sequence length="245" mass="27696">MLQFTPPLQPATLILRYKRFLADIVTPAGEALTIHCANTGAMTGCATPGDTIWYSTSDNPKRKYPQSWELTQTQTGDWICVNTMRANELVNLAIEKNQIAELSGYNFVRKEVKYGEENSRIDLLLQAEDRRDCYIEVKSVTLLQQQCGYFPDAVTLRGQKHLRELQNRVVNGHRAVLFFAVLHTGIKQVAPARHIDRRYAELLVQAQQAGVEVICYGFQLSPDGIELNTRLPLLLDEMLSSENAE</sequence>
<reference key="1">
    <citation type="journal article" date="2006" name="J. Bacteriol.">
        <title>Complete genome sequence of Yersinia pestis strains Antiqua and Nepal516: evidence of gene reduction in an emerging pathogen.</title>
        <authorList>
            <person name="Chain P.S.G."/>
            <person name="Hu P."/>
            <person name="Malfatti S.A."/>
            <person name="Radnedge L."/>
            <person name="Larimer F."/>
            <person name="Vergez L.M."/>
            <person name="Worsham P."/>
            <person name="Chu M.C."/>
            <person name="Andersen G.L."/>
        </authorList>
    </citation>
    <scope>NUCLEOTIDE SEQUENCE [LARGE SCALE GENOMIC DNA]</scope>
    <source>
        <strain>Nepal516</strain>
    </source>
</reference>
<reference key="2">
    <citation type="submission" date="2009-04" db="EMBL/GenBank/DDBJ databases">
        <title>Yersinia pestis Nepal516A whole genome shotgun sequencing project.</title>
        <authorList>
            <person name="Plunkett G. III"/>
            <person name="Anderson B.D."/>
            <person name="Baumler D.J."/>
            <person name="Burland V."/>
            <person name="Cabot E.L."/>
            <person name="Glasner J.D."/>
            <person name="Mau B."/>
            <person name="Neeno-Eckwall E."/>
            <person name="Perna N.T."/>
            <person name="Munk A.C."/>
            <person name="Tapia R."/>
            <person name="Green L.D."/>
            <person name="Rogers Y.C."/>
            <person name="Detter J.C."/>
            <person name="Bruce D.C."/>
            <person name="Brettin T.S."/>
        </authorList>
    </citation>
    <scope>NUCLEOTIDE SEQUENCE [LARGE SCALE GENOMIC DNA]</scope>
    <source>
        <strain>Nepal516</strain>
    </source>
</reference>
<proteinExistence type="inferred from homology"/>
<protein>
    <recommendedName>
        <fullName evidence="1">Sugar fermentation stimulation protein homolog</fullName>
    </recommendedName>
</protein>
<name>SFSA_YERPN</name>
<gene>
    <name evidence="1" type="primary">sfsA</name>
    <name type="ordered locus">YPN_0694</name>
    <name type="ORF">YP516_0737</name>
</gene>
<evidence type="ECO:0000255" key="1">
    <source>
        <dbReference type="HAMAP-Rule" id="MF_00095"/>
    </source>
</evidence>
<evidence type="ECO:0000305" key="2"/>
<dbReference type="EMBL" id="CP000305">
    <property type="protein sequence ID" value="ABG17026.1"/>
    <property type="status" value="ALT_INIT"/>
    <property type="molecule type" value="Genomic_DNA"/>
</dbReference>
<dbReference type="EMBL" id="ACNQ01000007">
    <property type="protein sequence ID" value="EEO77885.1"/>
    <property type="molecule type" value="Genomic_DNA"/>
</dbReference>
<dbReference type="RefSeq" id="WP_002228221.1">
    <property type="nucleotide sequence ID" value="NZ_ACNQ01000007.1"/>
</dbReference>
<dbReference type="SMR" id="Q1CLV4"/>
<dbReference type="GeneID" id="57975313"/>
<dbReference type="KEGG" id="ypn:YPN_0694"/>
<dbReference type="HOGENOM" id="CLU_052299_2_0_6"/>
<dbReference type="Proteomes" id="UP000008936">
    <property type="component" value="Chromosome"/>
</dbReference>
<dbReference type="GO" id="GO:0003677">
    <property type="term" value="F:DNA binding"/>
    <property type="evidence" value="ECO:0007669"/>
    <property type="project" value="InterPro"/>
</dbReference>
<dbReference type="CDD" id="cd22359">
    <property type="entry name" value="SfsA-like_bacterial"/>
    <property type="match status" value="1"/>
</dbReference>
<dbReference type="FunFam" id="2.40.50.580:FF:000001">
    <property type="entry name" value="Sugar fermentation stimulation protein A"/>
    <property type="match status" value="1"/>
</dbReference>
<dbReference type="FunFam" id="3.40.1350.60:FF:000001">
    <property type="entry name" value="Sugar fermentation stimulation protein A"/>
    <property type="match status" value="1"/>
</dbReference>
<dbReference type="Gene3D" id="2.40.50.580">
    <property type="match status" value="1"/>
</dbReference>
<dbReference type="Gene3D" id="3.40.1350.60">
    <property type="match status" value="1"/>
</dbReference>
<dbReference type="HAMAP" id="MF_00095">
    <property type="entry name" value="SfsA"/>
    <property type="match status" value="1"/>
</dbReference>
<dbReference type="InterPro" id="IPR005224">
    <property type="entry name" value="SfsA"/>
</dbReference>
<dbReference type="InterPro" id="IPR040452">
    <property type="entry name" value="SfsA_C"/>
</dbReference>
<dbReference type="InterPro" id="IPR041465">
    <property type="entry name" value="SfsA_N"/>
</dbReference>
<dbReference type="NCBIfam" id="TIGR00230">
    <property type="entry name" value="sfsA"/>
    <property type="match status" value="1"/>
</dbReference>
<dbReference type="PANTHER" id="PTHR30545">
    <property type="entry name" value="SUGAR FERMENTATION STIMULATION PROTEIN A"/>
    <property type="match status" value="1"/>
</dbReference>
<dbReference type="PANTHER" id="PTHR30545:SF2">
    <property type="entry name" value="SUGAR FERMENTATION STIMULATION PROTEIN A"/>
    <property type="match status" value="1"/>
</dbReference>
<dbReference type="Pfam" id="PF03749">
    <property type="entry name" value="SfsA"/>
    <property type="match status" value="1"/>
</dbReference>
<dbReference type="Pfam" id="PF17746">
    <property type="entry name" value="SfsA_N"/>
    <property type="match status" value="1"/>
</dbReference>
<feature type="chain" id="PRO_0000340165" description="Sugar fermentation stimulation protein homolog">
    <location>
        <begin position="1"/>
        <end position="245"/>
    </location>
</feature>